<sequence>MARGNAPRDSYHLVGISFFILGLGTLLPWNFFITAIPYFQGRLAGTNSSAETMGTNHTSPTDTFNFNNWVTLLSQLPLLLFTLLNSFLYQCIPESVRILGSLLAILLLFALTAALVKVDLSPGLFFSVTMASVWFINSFCAVLQGSLFGQLGTMPSTYSTLFLSGQGLAGIFAALAMLMSLASGVDAQTSALGYFITPCVGILLSIVCYLSLPHLKFARYYLTEKLSQAPTQELETKAELLQADEKNGVPISPQQASPTLDLDPEKEPEPEEPQKPGKPSVFVVFRKIWLTALCLVLVFTVTLSVFPAITAMVTTSSNSPGKWGLFFNPICCFLLFNVMDWLGRSLTSYFLWPDEDSQQLLPLLVCLRFLFVPLFMLCHVPQHARLPIIFRQDAYFITFMLLFAVSNGYLVSLTMCLAPRQVLPHEREVAGALMTFFLALGLSCGASLSFLFKALL</sequence>
<gene>
    <name evidence="11" type="primary">Slc29a2</name>
    <name type="synonym">Der12</name>
    <name type="synonym">Ent2</name>
    <name type="synonym">Hnp36</name>
</gene>
<protein>
    <recommendedName>
        <fullName evidence="7">Equilibrative nucleoside transporter 2</fullName>
        <shortName evidence="7">mENT2</shortName>
    </recommendedName>
    <alternativeName>
        <fullName>36 kDa hydrophobic nucleolar protein</fullName>
    </alternativeName>
    <alternativeName>
        <fullName evidence="8">36 kDa nucleolar protein HNP36</fullName>
    </alternativeName>
    <alternativeName>
        <fullName evidence="8">Delayed-early response protein 12</fullName>
    </alternativeName>
    <alternativeName>
        <fullName evidence="7">Equilibrative nitrobenzylmercaptopurine riboside-insensitive nucleoside transporter</fullName>
        <shortName evidence="7">Equilibrative NBMPR-insensitive nucleoside transporter</shortName>
    </alternativeName>
    <alternativeName>
        <fullName evidence="2">Nucleoside transporter, ei-type</fullName>
    </alternativeName>
    <alternativeName>
        <fullName>Solute carrier family 29 member 2</fullName>
    </alternativeName>
</protein>
<feature type="chain" id="PRO_0000209341" description="Equilibrative nucleoside transporter 2">
    <location>
        <begin position="1"/>
        <end position="456"/>
    </location>
</feature>
<feature type="transmembrane region" description="Helical" evidence="3">
    <location>
        <begin position="13"/>
        <end position="33"/>
    </location>
</feature>
<feature type="transmembrane region" description="Helical" evidence="3">
    <location>
        <begin position="69"/>
        <end position="89"/>
    </location>
</feature>
<feature type="transmembrane region" description="Helical" evidence="3">
    <location>
        <begin position="98"/>
        <end position="118"/>
    </location>
</feature>
<feature type="transmembrane region" description="Helical" evidence="3">
    <location>
        <begin position="123"/>
        <end position="143"/>
    </location>
</feature>
<feature type="transmembrane region" description="Helical" evidence="3">
    <location>
        <begin position="161"/>
        <end position="181"/>
    </location>
</feature>
<feature type="transmembrane region" description="Helical" evidence="3">
    <location>
        <begin position="192"/>
        <end position="212"/>
    </location>
</feature>
<feature type="transmembrane region" description="Helical" evidence="3">
    <location>
        <begin position="288"/>
        <end position="308"/>
    </location>
</feature>
<feature type="transmembrane region" description="Helical" evidence="3">
    <location>
        <begin position="323"/>
        <end position="343"/>
    </location>
</feature>
<feature type="transmembrane region" description="Helical" evidence="3">
    <location>
        <begin position="360"/>
        <end position="380"/>
    </location>
</feature>
<feature type="transmembrane region" description="Helical" evidence="3">
    <location>
        <begin position="396"/>
        <end position="416"/>
    </location>
</feature>
<feature type="transmembrane region" description="Helical" evidence="3">
    <location>
        <begin position="432"/>
        <end position="452"/>
    </location>
</feature>
<feature type="region of interest" description="Disordered" evidence="4">
    <location>
        <begin position="248"/>
        <end position="277"/>
    </location>
</feature>
<feature type="compositionally biased region" description="Basic and acidic residues" evidence="4">
    <location>
        <begin position="263"/>
        <end position="275"/>
    </location>
</feature>
<feature type="modified residue" description="Phosphoserine" evidence="2">
    <location>
        <position position="252"/>
    </location>
</feature>
<feature type="glycosylation site" description="N-linked (GlcNAc...) asparagine" evidence="3">
    <location>
        <position position="56"/>
    </location>
</feature>
<organism>
    <name type="scientific">Mus musculus</name>
    <name type="common">Mouse</name>
    <dbReference type="NCBI Taxonomy" id="10090"/>
    <lineage>
        <taxon>Eukaryota</taxon>
        <taxon>Metazoa</taxon>
        <taxon>Chordata</taxon>
        <taxon>Craniata</taxon>
        <taxon>Vertebrata</taxon>
        <taxon>Euteleostomi</taxon>
        <taxon>Mammalia</taxon>
        <taxon>Eutheria</taxon>
        <taxon>Euarchontoglires</taxon>
        <taxon>Glires</taxon>
        <taxon>Rodentia</taxon>
        <taxon>Myomorpha</taxon>
        <taxon>Muroidea</taxon>
        <taxon>Muridae</taxon>
        <taxon>Murinae</taxon>
        <taxon>Mus</taxon>
        <taxon>Mus</taxon>
    </lineage>
</organism>
<reference key="1">
    <citation type="journal article" date="1995" name="Biochem. Biophys. Res. Commun.">
        <title>A mammalian delayed-early response gene encodes HNP36, a novel, conserved nucleolar protein.</title>
        <authorList>
            <person name="Williams J.B."/>
            <person name="Lanahan A.A."/>
        </authorList>
    </citation>
    <scope>NUCLEOTIDE SEQUENCE [MRNA] OF 64-456</scope>
    <scope>INDUCTION BY PDGF AND FGF</scope>
    <source>
        <strain>BALB/cJ</strain>
        <tissue>Fibroblast</tissue>
    </source>
</reference>
<reference key="2">
    <citation type="journal article" date="2000" name="Biochem. J.">
        <title>Molecular cloning and functional characterization of inhibitor-sensitive (mENT1) and inhibitor-resistant (mENT2) equilibrative nucleoside transporters from mouse brain.</title>
        <authorList>
            <person name="Kiss A."/>
            <person name="Farah K."/>
            <person name="Kim J."/>
            <person name="Garriock R.J."/>
            <person name="Drysdale T.A."/>
            <person name="Hammond J.R."/>
        </authorList>
    </citation>
    <scope>NUCLEOTIDE SEQUENCE [MRNA]</scope>
    <scope>FUNCTION</scope>
    <scope>TRANSPORTER ACTIVITY</scope>
    <scope>MISCELLANEOUS</scope>
    <source>
        <strain>CD-1</strain>
        <tissue>Brain</tissue>
    </source>
</reference>
<reference key="3">
    <citation type="submission" date="2005-07" db="EMBL/GenBank/DDBJ databases">
        <authorList>
            <person name="Mural R.J."/>
            <person name="Adams M.D."/>
            <person name="Myers E.W."/>
            <person name="Smith H.O."/>
            <person name="Venter J.C."/>
        </authorList>
    </citation>
    <scope>NUCLEOTIDE SEQUENCE [LARGE SCALE GENOMIC DNA]</scope>
</reference>
<reference key="4">
    <citation type="journal article" date="2004" name="Genome Res.">
        <title>The status, quality, and expansion of the NIH full-length cDNA project: the Mammalian Gene Collection (MGC).</title>
        <authorList>
            <consortium name="The MGC Project Team"/>
        </authorList>
    </citation>
    <scope>NUCLEOTIDE SEQUENCE [LARGE SCALE MRNA]</scope>
    <source>
        <tissue>Eye</tissue>
    </source>
</reference>
<accession>Q61672</accession>
<accession>Q9JIT8</accession>
<keyword id="KW-1003">Cell membrane</keyword>
<keyword id="KW-0325">Glycoprotein</keyword>
<keyword id="KW-0472">Membrane</keyword>
<keyword id="KW-0539">Nucleus</keyword>
<keyword id="KW-0597">Phosphoprotein</keyword>
<keyword id="KW-1185">Reference proteome</keyword>
<keyword id="KW-0812">Transmembrane</keyword>
<keyword id="KW-1133">Transmembrane helix</keyword>
<keyword id="KW-0813">Transport</keyword>
<dbReference type="EMBL" id="AF183397">
    <property type="protein sequence ID" value="AAF78477.1"/>
    <property type="molecule type" value="mRNA"/>
</dbReference>
<dbReference type="EMBL" id="CH466612">
    <property type="protein sequence ID" value="EDL33088.1"/>
    <property type="molecule type" value="Genomic_DNA"/>
</dbReference>
<dbReference type="EMBL" id="BC048958">
    <property type="protein sequence ID" value="AAH48958.1"/>
    <property type="molecule type" value="mRNA"/>
</dbReference>
<dbReference type="EMBL" id="X86682">
    <property type="protein sequence ID" value="CAA60381.1"/>
    <property type="status" value="ALT_INIT"/>
    <property type="molecule type" value="mRNA"/>
</dbReference>
<dbReference type="CCDS" id="CCDS50354.1"/>
<dbReference type="PIR" id="JC4195">
    <property type="entry name" value="JC4195"/>
</dbReference>
<dbReference type="RefSeq" id="NP_031880.2">
    <property type="nucleotide sequence ID" value="NM_007854.3"/>
</dbReference>
<dbReference type="SMR" id="Q61672"/>
<dbReference type="BioGRID" id="199208">
    <property type="interactions" value="1"/>
</dbReference>
<dbReference type="FunCoup" id="Q61672">
    <property type="interactions" value="176"/>
</dbReference>
<dbReference type="STRING" id="10090.ENSMUSP00000157780"/>
<dbReference type="ChEMBL" id="CHEMBL1287612"/>
<dbReference type="TCDB" id="2.A.57.1.2">
    <property type="family name" value="the equilibrative nucleoside transporter (ent) family"/>
</dbReference>
<dbReference type="GlyCosmos" id="Q61672">
    <property type="glycosylation" value="1 site, No reported glycans"/>
</dbReference>
<dbReference type="GlyGen" id="Q61672">
    <property type="glycosylation" value="1 site"/>
</dbReference>
<dbReference type="iPTMnet" id="Q61672"/>
<dbReference type="PhosphoSitePlus" id="Q61672"/>
<dbReference type="SwissPalm" id="Q61672"/>
<dbReference type="PaxDb" id="10090-ENSMUSP00000025826"/>
<dbReference type="PeptideAtlas" id="Q61672"/>
<dbReference type="ProteomicsDB" id="253379"/>
<dbReference type="Antibodypedia" id="16257">
    <property type="antibodies" value="136 antibodies from 24 providers"/>
</dbReference>
<dbReference type="DNASU" id="13340"/>
<dbReference type="Ensembl" id="ENSMUST00000236152.2">
    <property type="protein sequence ID" value="ENSMUSP00000157780.2"/>
    <property type="gene ID" value="ENSMUSG00000024891.7"/>
</dbReference>
<dbReference type="GeneID" id="13340"/>
<dbReference type="KEGG" id="mmu:13340"/>
<dbReference type="UCSC" id="uc008gbv.2">
    <property type="organism name" value="mouse"/>
</dbReference>
<dbReference type="AGR" id="MGI:1345278"/>
<dbReference type="CTD" id="3177"/>
<dbReference type="MGI" id="MGI:1345278">
    <property type="gene designation" value="Slc29a2"/>
</dbReference>
<dbReference type="VEuPathDB" id="HostDB:ENSMUSG00000024891"/>
<dbReference type="eggNOG" id="KOG1479">
    <property type="taxonomic scope" value="Eukaryota"/>
</dbReference>
<dbReference type="GeneTree" id="ENSGT00950000182898"/>
<dbReference type="HOGENOM" id="CLU_021611_6_0_1"/>
<dbReference type="InParanoid" id="Q61672"/>
<dbReference type="OMA" id="YQCIPEA"/>
<dbReference type="OrthoDB" id="46396at2759"/>
<dbReference type="PhylomeDB" id="Q61672"/>
<dbReference type="TreeFam" id="TF313950"/>
<dbReference type="Reactome" id="R-MMU-83936">
    <property type="pathway name" value="Transport of nucleosides and free purine and pyrimidine bases across the plasma membrane"/>
</dbReference>
<dbReference type="Reactome" id="R-MMU-9748787">
    <property type="pathway name" value="Azathioprine ADME"/>
</dbReference>
<dbReference type="BioGRID-ORCS" id="13340">
    <property type="hits" value="1 hit in 81 CRISPR screens"/>
</dbReference>
<dbReference type="PRO" id="PR:Q61672"/>
<dbReference type="Proteomes" id="UP000000589">
    <property type="component" value="Chromosome 19"/>
</dbReference>
<dbReference type="RNAct" id="Q61672">
    <property type="molecule type" value="protein"/>
</dbReference>
<dbReference type="Bgee" id="ENSMUSG00000024891">
    <property type="expression patterns" value="Expressed in ectoplacental cone and 94 other cell types or tissues"/>
</dbReference>
<dbReference type="ExpressionAtlas" id="Q61672">
    <property type="expression patterns" value="baseline and differential"/>
</dbReference>
<dbReference type="GO" id="GO:0016324">
    <property type="term" value="C:apical plasma membrane"/>
    <property type="evidence" value="ECO:0000250"/>
    <property type="project" value="UniProtKB"/>
</dbReference>
<dbReference type="GO" id="GO:0016323">
    <property type="term" value="C:basolateral plasma membrane"/>
    <property type="evidence" value="ECO:0000250"/>
    <property type="project" value="UniProtKB"/>
</dbReference>
<dbReference type="GO" id="GO:0031965">
    <property type="term" value="C:nuclear membrane"/>
    <property type="evidence" value="ECO:0007669"/>
    <property type="project" value="UniProtKB-SubCell"/>
</dbReference>
<dbReference type="GO" id="GO:0005886">
    <property type="term" value="C:plasma membrane"/>
    <property type="evidence" value="ECO:0000316"/>
    <property type="project" value="MGI"/>
</dbReference>
<dbReference type="GO" id="GO:0015207">
    <property type="term" value="F:adenine transmembrane transporter activity"/>
    <property type="evidence" value="ECO:0000250"/>
    <property type="project" value="UniProtKB"/>
</dbReference>
<dbReference type="GO" id="GO:0015212">
    <property type="term" value="F:cytidine transmembrane transporter activity"/>
    <property type="evidence" value="ECO:0000250"/>
    <property type="project" value="UniProtKB"/>
</dbReference>
<dbReference type="GO" id="GO:0015208">
    <property type="term" value="F:guanine transmembrane transporter activity"/>
    <property type="evidence" value="ECO:0000250"/>
    <property type="project" value="UniProtKB"/>
</dbReference>
<dbReference type="GO" id="GO:0005326">
    <property type="term" value="F:neurotransmitter transmembrane transporter activity"/>
    <property type="evidence" value="ECO:0000316"/>
    <property type="project" value="ARUK-UCL"/>
</dbReference>
<dbReference type="GO" id="GO:0015205">
    <property type="term" value="F:nucleobase transmembrane transporter activity"/>
    <property type="evidence" value="ECO:0000250"/>
    <property type="project" value="UniProtKB"/>
</dbReference>
<dbReference type="GO" id="GO:0005337">
    <property type="term" value="F:nucleoside transmembrane transporter activity"/>
    <property type="evidence" value="ECO:0000314"/>
    <property type="project" value="MGI"/>
</dbReference>
<dbReference type="GO" id="GO:0015211">
    <property type="term" value="F:purine nucleoside transmembrane transporter activity"/>
    <property type="evidence" value="ECO:0000316"/>
    <property type="project" value="ARUK-UCL"/>
</dbReference>
<dbReference type="GO" id="GO:0015210">
    <property type="term" value="F:uracil transmembrane transporter activity"/>
    <property type="evidence" value="ECO:0000250"/>
    <property type="project" value="UniProtKB"/>
</dbReference>
<dbReference type="GO" id="GO:0015213">
    <property type="term" value="F:uridine transmembrane transporter activity"/>
    <property type="evidence" value="ECO:0000314"/>
    <property type="project" value="UniProtKB"/>
</dbReference>
<dbReference type="GO" id="GO:0015853">
    <property type="term" value="P:adenine transport"/>
    <property type="evidence" value="ECO:0000250"/>
    <property type="project" value="UniProtKB"/>
</dbReference>
<dbReference type="GO" id="GO:0032238">
    <property type="term" value="P:adenosine transport"/>
    <property type="evidence" value="ECO:0000316"/>
    <property type="project" value="ARUK-UCL"/>
</dbReference>
<dbReference type="GO" id="GO:0015861">
    <property type="term" value="P:cytidine transport"/>
    <property type="evidence" value="ECO:0000250"/>
    <property type="project" value="UniProtKB"/>
</dbReference>
<dbReference type="GO" id="GO:1903716">
    <property type="term" value="P:guanine transmembrane transport"/>
    <property type="evidence" value="ECO:0000250"/>
    <property type="project" value="UniProtKB"/>
</dbReference>
<dbReference type="GO" id="GO:0035344">
    <property type="term" value="P:hypoxanthine transport"/>
    <property type="evidence" value="ECO:0000250"/>
    <property type="project" value="UniProtKB"/>
</dbReference>
<dbReference type="GO" id="GO:0035340">
    <property type="term" value="P:inosine transport"/>
    <property type="evidence" value="ECO:0000250"/>
    <property type="project" value="UniProtKB"/>
</dbReference>
<dbReference type="GO" id="GO:0001504">
    <property type="term" value="P:neurotransmitter uptake"/>
    <property type="evidence" value="ECO:0000316"/>
    <property type="project" value="ARUK-UCL"/>
</dbReference>
<dbReference type="GO" id="GO:0015851">
    <property type="term" value="P:nucleobase transport"/>
    <property type="evidence" value="ECO:0000250"/>
    <property type="project" value="UniProtKB"/>
</dbReference>
<dbReference type="GO" id="GO:1901642">
    <property type="term" value="P:nucleoside transmembrane transport"/>
    <property type="evidence" value="ECO:0000314"/>
    <property type="project" value="UniProtKB"/>
</dbReference>
<dbReference type="GO" id="GO:0015858">
    <property type="term" value="P:nucleoside transport"/>
    <property type="evidence" value="ECO:0000314"/>
    <property type="project" value="MGI"/>
</dbReference>
<dbReference type="GO" id="GO:1904823">
    <property type="term" value="P:purine nucleobase transmembrane transport"/>
    <property type="evidence" value="ECO:0000250"/>
    <property type="project" value="UniProtKB"/>
</dbReference>
<dbReference type="GO" id="GO:0015860">
    <property type="term" value="P:purine nucleoside transmembrane transport"/>
    <property type="evidence" value="ECO:0000316"/>
    <property type="project" value="ARUK-UCL"/>
</dbReference>
<dbReference type="GO" id="GO:0035364">
    <property type="term" value="P:thymine transport"/>
    <property type="evidence" value="ECO:0000250"/>
    <property type="project" value="UniProtKB"/>
</dbReference>
<dbReference type="GO" id="GO:1903791">
    <property type="term" value="P:uracil transmembrane transport"/>
    <property type="evidence" value="ECO:0000250"/>
    <property type="project" value="UniProtKB"/>
</dbReference>
<dbReference type="GO" id="GO:0015862">
    <property type="term" value="P:uridine transmembrane transport"/>
    <property type="evidence" value="ECO:0000314"/>
    <property type="project" value="UniProtKB"/>
</dbReference>
<dbReference type="FunFam" id="1.20.1250.20:FF:000359">
    <property type="entry name" value="equilibrative nucleoside transporter 2"/>
    <property type="match status" value="1"/>
</dbReference>
<dbReference type="Gene3D" id="1.20.1250.20">
    <property type="entry name" value="MFS general substrate transporter like domains"/>
    <property type="match status" value="1"/>
</dbReference>
<dbReference type="InterPro" id="IPR034764">
    <property type="entry name" value="ENT1/ENT2"/>
</dbReference>
<dbReference type="InterPro" id="IPR002259">
    <property type="entry name" value="Eqnu_transpt"/>
</dbReference>
<dbReference type="InterPro" id="IPR036259">
    <property type="entry name" value="MFS_trans_sf"/>
</dbReference>
<dbReference type="NCBIfam" id="TIGR00939">
    <property type="entry name" value="2a57"/>
    <property type="match status" value="1"/>
</dbReference>
<dbReference type="PANTHER" id="PTHR10332">
    <property type="entry name" value="EQUILIBRATIVE NUCLEOSIDE TRANSPORTER"/>
    <property type="match status" value="1"/>
</dbReference>
<dbReference type="PANTHER" id="PTHR10332:SF8">
    <property type="entry name" value="EQUILIBRATIVE NUCLEOSIDE TRANSPORTER 2"/>
    <property type="match status" value="1"/>
</dbReference>
<dbReference type="Pfam" id="PF01733">
    <property type="entry name" value="Nucleoside_tran"/>
    <property type="match status" value="1"/>
</dbReference>
<dbReference type="PIRSF" id="PIRSF016379">
    <property type="entry name" value="ENT"/>
    <property type="match status" value="1"/>
</dbReference>
<dbReference type="PRINTS" id="PR01130">
    <property type="entry name" value="DERENTRNSPRT"/>
</dbReference>
<dbReference type="SUPFAM" id="SSF103473">
    <property type="entry name" value="MFS general substrate transporter"/>
    <property type="match status" value="1"/>
</dbReference>
<comment type="function">
    <text evidence="1 2 5">Bidirectional uniporter involved in the facilitative transport of nucleosides and nucleobases, and contributes to maintaining their cellular homeostasis (PubMed:11085929). Functions as a Na(+)-independent, passive transporter (By similarity). Involved in the transport of nucleosides such as inosine, adenosine, uridine, thymidine, cytidine and guanosine (PubMed:11085929). Also able to transport purine nucleobases (hypoxanthine, adenine, guanine) and pyrimidine nucleobases (thymine, uracil) (By similarity). Involved in nucleoside transport at basolateral membrane of kidney cells, allowing liver absorption of nucleoside metabolites (By similarity). Mediates apical nucleoside uptake into Sertoli cells, thereby regulating the transport of nucleosides in testis across the blood-testis-barrier (By similarity). Mediates both the influx and efflux of hypoxanthine in skeletal muscle microvascular endothelial cells to control the amount of intracellular hypoxanthine available for xanthine oxidase-mediated ROS production (By similarity).</text>
</comment>
<comment type="catalytic activity">
    <reaction evidence="2">
        <text>inosine(in) = inosine(out)</text>
        <dbReference type="Rhea" id="RHEA:75375"/>
        <dbReference type="ChEBI" id="CHEBI:17596"/>
    </reaction>
    <physiologicalReaction direction="left-to-right" evidence="2">
        <dbReference type="Rhea" id="RHEA:75376"/>
    </physiologicalReaction>
    <physiologicalReaction direction="right-to-left" evidence="2">
        <dbReference type="Rhea" id="RHEA:75377"/>
    </physiologicalReaction>
</comment>
<comment type="catalytic activity">
    <reaction evidence="2">
        <text>adenosine(in) = adenosine(out)</text>
        <dbReference type="Rhea" id="RHEA:75343"/>
        <dbReference type="ChEBI" id="CHEBI:16335"/>
    </reaction>
    <physiologicalReaction direction="left-to-right" evidence="2">
        <dbReference type="Rhea" id="RHEA:75344"/>
    </physiologicalReaction>
    <physiologicalReaction direction="right-to-left" evidence="2">
        <dbReference type="Rhea" id="RHEA:75345"/>
    </physiologicalReaction>
</comment>
<comment type="catalytic activity">
    <reaction evidence="5">
        <text>uridine(out) = uridine(in)</text>
        <dbReference type="Rhea" id="RHEA:71519"/>
        <dbReference type="ChEBI" id="CHEBI:16704"/>
    </reaction>
    <physiologicalReaction direction="left-to-right" evidence="10">
        <dbReference type="Rhea" id="RHEA:71520"/>
    </physiologicalReaction>
    <physiologicalReaction direction="right-to-left" evidence="10">
        <dbReference type="Rhea" id="RHEA:71521"/>
    </physiologicalReaction>
</comment>
<comment type="catalytic activity">
    <reaction evidence="2">
        <text>thymidine(in) = thymidine(out)</text>
        <dbReference type="Rhea" id="RHEA:75363"/>
        <dbReference type="ChEBI" id="CHEBI:17748"/>
    </reaction>
    <physiologicalReaction direction="left-to-right" evidence="2">
        <dbReference type="Rhea" id="RHEA:75364"/>
    </physiologicalReaction>
    <physiologicalReaction direction="right-to-left" evidence="2">
        <dbReference type="Rhea" id="RHEA:75365"/>
    </physiologicalReaction>
</comment>
<comment type="catalytic activity">
    <reaction evidence="2">
        <text>hypoxanthine(out) = hypoxanthine(in)</text>
        <dbReference type="Rhea" id="RHEA:71515"/>
        <dbReference type="ChEBI" id="CHEBI:17368"/>
    </reaction>
    <physiologicalReaction direction="left-to-right" evidence="2">
        <dbReference type="Rhea" id="RHEA:71516"/>
    </physiologicalReaction>
    <physiologicalReaction direction="right-to-left" evidence="2">
        <dbReference type="Rhea" id="RHEA:71517"/>
    </physiologicalReaction>
</comment>
<comment type="catalytic activity">
    <reaction evidence="2">
        <text>adenine(out) = adenine(in)</text>
        <dbReference type="Rhea" id="RHEA:71523"/>
        <dbReference type="ChEBI" id="CHEBI:16708"/>
    </reaction>
    <physiologicalReaction direction="left-to-right" evidence="2">
        <dbReference type="Rhea" id="RHEA:71524"/>
    </physiologicalReaction>
    <physiologicalReaction direction="right-to-left" evidence="2">
        <dbReference type="Rhea" id="RHEA:71525"/>
    </physiologicalReaction>
</comment>
<comment type="catalytic activity">
    <reaction evidence="2">
        <text>cytidine(in) = cytidine(out)</text>
        <dbReference type="Rhea" id="RHEA:75367"/>
        <dbReference type="ChEBI" id="CHEBI:17562"/>
    </reaction>
    <physiologicalReaction direction="left-to-right" evidence="2">
        <dbReference type="Rhea" id="RHEA:75368"/>
    </physiologicalReaction>
    <physiologicalReaction direction="right-to-left" evidence="2">
        <dbReference type="Rhea" id="RHEA:75369"/>
    </physiologicalReaction>
</comment>
<comment type="catalytic activity">
    <reaction evidence="2">
        <text>thymine(out) = thymine(in)</text>
        <dbReference type="Rhea" id="RHEA:71527"/>
        <dbReference type="ChEBI" id="CHEBI:17821"/>
    </reaction>
    <physiologicalReaction direction="left-to-right" evidence="2">
        <dbReference type="Rhea" id="RHEA:71528"/>
    </physiologicalReaction>
    <physiologicalReaction direction="right-to-left" evidence="2">
        <dbReference type="Rhea" id="RHEA:71529"/>
    </physiologicalReaction>
</comment>
<comment type="catalytic activity">
    <reaction evidence="2">
        <text>uracil(in) = uracil(out)</text>
        <dbReference type="Rhea" id="RHEA:69404"/>
        <dbReference type="ChEBI" id="CHEBI:17568"/>
    </reaction>
    <physiologicalReaction direction="left-to-right" evidence="2">
        <dbReference type="Rhea" id="RHEA:69405"/>
    </physiologicalReaction>
    <physiologicalReaction direction="right-to-left" evidence="2">
        <dbReference type="Rhea" id="RHEA:69406"/>
    </physiologicalReaction>
</comment>
<comment type="catalytic activity">
    <reaction evidence="2">
        <text>guanine(out) = guanine(in)</text>
        <dbReference type="Rhea" id="RHEA:71531"/>
        <dbReference type="ChEBI" id="CHEBI:16235"/>
    </reaction>
    <physiologicalReaction direction="left-to-right" evidence="2">
        <dbReference type="Rhea" id="RHEA:71532"/>
    </physiologicalReaction>
    <physiologicalReaction direction="right-to-left" evidence="2">
        <dbReference type="Rhea" id="RHEA:71533"/>
    </physiologicalReaction>
</comment>
<comment type="catalytic activity">
    <reaction evidence="2">
        <text>guanosine(in) = guanosine(out)</text>
        <dbReference type="Rhea" id="RHEA:75371"/>
        <dbReference type="ChEBI" id="CHEBI:16750"/>
    </reaction>
    <physiologicalReaction direction="left-to-right" evidence="2">
        <dbReference type="Rhea" id="RHEA:75372"/>
    </physiologicalReaction>
    <physiologicalReaction direction="right-to-left" evidence="2">
        <dbReference type="Rhea" id="RHEA:75373"/>
    </physiologicalReaction>
</comment>
<comment type="subcellular location">
    <subcellularLocation>
        <location evidence="2">Apical cell membrane</location>
        <topology evidence="9">Multi-pass membrane protein</topology>
    </subcellularLocation>
    <subcellularLocation>
        <location evidence="2">Basolateral cell membrane</location>
        <topology evidence="9">Multi-pass membrane protein</topology>
    </subcellularLocation>
    <subcellularLocation>
        <location evidence="2">Nucleus membrane</location>
        <topology evidence="9">Multi-pass membrane protein</topology>
    </subcellularLocation>
</comment>
<comment type="induction">
    <text evidence="6">By platelet derived growth factor (PDGF) and fibroblast growth factor (FGF).</text>
</comment>
<comment type="miscellaneous">
    <text evidence="5">Transport activity is insensitive to nanomolar concentrations of the inhibitor nitrobenzylmercaptopurine riboside (NBMPR).</text>
</comment>
<comment type="similarity">
    <text evidence="9">Belongs to the SLC29A/ENT transporter (TC 2.A.57) family.</text>
</comment>
<comment type="sequence caution" evidence="9">
    <conflict type="erroneous initiation">
        <sequence resource="EMBL-CDS" id="CAA60381"/>
    </conflict>
    <text>Truncated N-terminus.</text>
</comment>
<name>S29A2_MOUSE</name>
<proteinExistence type="evidence at transcript level"/>
<evidence type="ECO:0000250" key="1">
    <source>
        <dbReference type="UniProtKB" id="O54699"/>
    </source>
</evidence>
<evidence type="ECO:0000250" key="2">
    <source>
        <dbReference type="UniProtKB" id="Q14542"/>
    </source>
</evidence>
<evidence type="ECO:0000255" key="3"/>
<evidence type="ECO:0000256" key="4">
    <source>
        <dbReference type="SAM" id="MobiDB-lite"/>
    </source>
</evidence>
<evidence type="ECO:0000269" key="5">
    <source>
    </source>
</evidence>
<evidence type="ECO:0000269" key="6">
    <source>
    </source>
</evidence>
<evidence type="ECO:0000303" key="7">
    <source>
    </source>
</evidence>
<evidence type="ECO:0000303" key="8">
    <source>
    </source>
</evidence>
<evidence type="ECO:0000305" key="9"/>
<evidence type="ECO:0000305" key="10">
    <source>
    </source>
</evidence>
<evidence type="ECO:0000312" key="11">
    <source>
        <dbReference type="MGI" id="MGI:1345278"/>
    </source>
</evidence>